<reference key="1">
    <citation type="journal article" date="1984" name="Plant Mol. Biol.">
        <title>Localization and nucleotide sequence of the gene for the membrane polypeptide D2 from pea chloroplast DNA.</title>
        <authorList>
            <person name="Rasmussen O.F."/>
            <person name="Bookjans G."/>
            <person name="Stutmann B.M."/>
            <person name="Henningsen K.W."/>
        </authorList>
        <dbReference type="AGRICOLA" id="IND84114033"/>
    </citation>
    <scope>NUCLEOTIDE SEQUENCE [GENOMIC DNA]</scope>
    <source>
        <strain>cv. Rosakrone</strain>
    </source>
</reference>
<reference key="2">
    <citation type="journal article" date="1986" name="Plant Mol. Biol.">
        <title>Structure of a 3.2 kb region of pea chloroplast DNA containing the gene for the 44 kD photosystem II polypeptide.</title>
        <authorList>
            <person name="Bookjans G.B."/>
            <person name="Stummann B.M."/>
            <person name="Rasmussen O.F."/>
            <person name="Henningsen K.W."/>
        </authorList>
        <dbReference type="AGRICOLA" id="IND87019930"/>
    </citation>
    <scope>NUCLEOTIDE SEQUENCE [GENOMIC DNA]</scope>
    <source>
        <strain>cv. Rosakrone</strain>
    </source>
</reference>
<dbReference type="EMBL" id="M27309">
    <property type="protein sequence ID" value="AAB59336.1"/>
    <property type="molecule type" value="Genomic_DNA"/>
</dbReference>
<dbReference type="RefSeq" id="YP_003587541.1">
    <property type="nucleotide sequence ID" value="NC_014057.1"/>
</dbReference>
<dbReference type="PDB" id="5XNL">
    <property type="method" value="EM"/>
    <property type="resolution" value="2.70 A"/>
    <property type="chains" value="C/c=1-473"/>
</dbReference>
<dbReference type="PDB" id="5XNM">
    <property type="method" value="EM"/>
    <property type="resolution" value="3.20 A"/>
    <property type="chains" value="C/c=1-473"/>
</dbReference>
<dbReference type="PDB" id="6YP7">
    <property type="method" value="EM"/>
    <property type="resolution" value="3.80 A"/>
    <property type="chains" value="C/c=24-473"/>
</dbReference>
<dbReference type="PDBsum" id="5XNL"/>
<dbReference type="PDBsum" id="5XNM"/>
<dbReference type="PDBsum" id="6YP7"/>
<dbReference type="EMDB" id="EMD-10865"/>
<dbReference type="EMDB" id="EMD-6741"/>
<dbReference type="EMDB" id="EMD-6742"/>
<dbReference type="SMR" id="P06004"/>
<dbReference type="GeneID" id="9073078"/>
<dbReference type="GO" id="GO:0009535">
    <property type="term" value="C:chloroplast thylakoid membrane"/>
    <property type="evidence" value="ECO:0007669"/>
    <property type="project" value="UniProtKB-SubCell"/>
</dbReference>
<dbReference type="GO" id="GO:0009523">
    <property type="term" value="C:photosystem II"/>
    <property type="evidence" value="ECO:0007669"/>
    <property type="project" value="UniProtKB-KW"/>
</dbReference>
<dbReference type="GO" id="GO:0016168">
    <property type="term" value="F:chlorophyll binding"/>
    <property type="evidence" value="ECO:0007669"/>
    <property type="project" value="UniProtKB-UniRule"/>
</dbReference>
<dbReference type="GO" id="GO:0045156">
    <property type="term" value="F:electron transporter, transferring electrons within the cyclic electron transport pathway of photosynthesis activity"/>
    <property type="evidence" value="ECO:0007669"/>
    <property type="project" value="InterPro"/>
</dbReference>
<dbReference type="GO" id="GO:0046872">
    <property type="term" value="F:metal ion binding"/>
    <property type="evidence" value="ECO:0007669"/>
    <property type="project" value="UniProtKB-KW"/>
</dbReference>
<dbReference type="GO" id="GO:0009772">
    <property type="term" value="P:photosynthetic electron transport in photosystem II"/>
    <property type="evidence" value="ECO:0007669"/>
    <property type="project" value="InterPro"/>
</dbReference>
<dbReference type="FunFam" id="1.10.10.670:FF:000001">
    <property type="entry name" value="Photosystem II CP43 reaction center protein"/>
    <property type="match status" value="1"/>
</dbReference>
<dbReference type="Gene3D" id="1.10.10.670">
    <property type="entry name" value="photosystem ii from thermosynechococcus elongatus"/>
    <property type="match status" value="1"/>
</dbReference>
<dbReference type="HAMAP" id="MF_01496">
    <property type="entry name" value="PSII_PsbC_CP43"/>
    <property type="match status" value="1"/>
</dbReference>
<dbReference type="InterPro" id="IPR000932">
    <property type="entry name" value="PS_antenna-like"/>
</dbReference>
<dbReference type="InterPro" id="IPR036001">
    <property type="entry name" value="PS_II_antenna-like_sf"/>
</dbReference>
<dbReference type="InterPro" id="IPR005869">
    <property type="entry name" value="PSII_PsbC"/>
</dbReference>
<dbReference type="InterPro" id="IPR044900">
    <property type="entry name" value="PSII_PsbC_sf"/>
</dbReference>
<dbReference type="NCBIfam" id="TIGR01153">
    <property type="entry name" value="psbC"/>
    <property type="match status" value="1"/>
</dbReference>
<dbReference type="Pfam" id="PF00421">
    <property type="entry name" value="PSII"/>
    <property type="match status" value="1"/>
</dbReference>
<dbReference type="SUPFAM" id="SSF161077">
    <property type="entry name" value="Photosystem II antenna protein-like"/>
    <property type="match status" value="1"/>
</dbReference>
<sequence>MKTLYSLRRFYHVETLFNGTLALTGRDQETTGFAWWAGNARLINLSGKLLGAHVAHAGLIVFWAGAMNLFEVAHFVPEKPMYEQGLILLPHLATLGWGVGPGGEVIDTFPYFVSGVLHLISSAVLGFGGIYHALLGPETLEESFPFFGYVWKDRNKMTTILGIHLILLGIGSFLLVFKAFYFGGIYDTWAPGGGDVRKITNFTLSPSILFGYLLKSPFGGEGWIVSVDDLEDIIGGHVWLGSICILGGIWHILTKPFAWARRALVWSGEAYLSYSLGALAVFGFIACCFVWFNNTAYPSEFYGPTGPEASQAQAFTFLVRDQRLGANVGSAQGPTGLGKYLMRSPTGEVIFGGETMRFWDLRAPWLEPLRGPNGLDLSRLKKDIQPWQERRSAEYMTHAPLGSLNSVGGVATEINAVNYVSPRSWLATSHFVLGFFLFVGHLWHAGRARAAAAGFEKGIDRDFEPVLSMTPLN</sequence>
<geneLocation type="chloroplast"/>
<name>PSBC_PEA</name>
<feature type="propeptide" id="PRO_0000431197" evidence="1">
    <location>
        <begin position="1"/>
        <end position="14"/>
    </location>
</feature>
<feature type="chain" id="PRO_0000077524" description="Photosystem II CP43 reaction center protein" evidence="1">
    <location>
        <begin position="15"/>
        <end position="473"/>
    </location>
</feature>
<feature type="transmembrane region" description="Helical" evidence="1">
    <location>
        <begin position="69"/>
        <end position="93"/>
    </location>
</feature>
<feature type="transmembrane region" description="Helical" evidence="1">
    <location>
        <begin position="134"/>
        <end position="155"/>
    </location>
</feature>
<feature type="transmembrane region" description="Helical" evidence="1">
    <location>
        <begin position="178"/>
        <end position="200"/>
    </location>
</feature>
<feature type="transmembrane region" description="Helical" evidence="1">
    <location>
        <begin position="255"/>
        <end position="275"/>
    </location>
</feature>
<feature type="transmembrane region" description="Helical" evidence="1">
    <location>
        <begin position="291"/>
        <end position="312"/>
    </location>
</feature>
<feature type="transmembrane region" description="Helical" evidence="1">
    <location>
        <begin position="447"/>
        <end position="471"/>
    </location>
</feature>
<feature type="binding site" evidence="1">
    <location>
        <position position="367"/>
    </location>
    <ligand>
        <name>[CaMn4O5] cluster</name>
        <dbReference type="ChEBI" id="CHEBI:189552"/>
    </ligand>
</feature>
<feature type="modified residue" description="N-acetylthreonine" evidence="1">
    <location>
        <position position="15"/>
    </location>
</feature>
<feature type="modified residue" description="Phosphothreonine" evidence="1">
    <location>
        <position position="15"/>
    </location>
</feature>
<feature type="helix" evidence="3">
    <location>
        <begin position="28"/>
        <end position="31"/>
    </location>
</feature>
<feature type="helix" evidence="3">
    <location>
        <begin position="35"/>
        <end position="42"/>
    </location>
</feature>
<feature type="helix" evidence="3">
    <location>
        <begin position="46"/>
        <end position="73"/>
    </location>
</feature>
<feature type="helix" evidence="3">
    <location>
        <begin position="81"/>
        <end position="83"/>
    </location>
</feature>
<feature type="helix" evidence="3">
    <location>
        <begin position="89"/>
        <end position="94"/>
    </location>
</feature>
<feature type="turn" evidence="3">
    <location>
        <begin position="95"/>
        <end position="98"/>
    </location>
</feature>
<feature type="helix" evidence="3">
    <location>
        <begin position="101"/>
        <end position="103"/>
    </location>
</feature>
<feature type="helix" evidence="3">
    <location>
        <begin position="109"/>
        <end position="134"/>
    </location>
</feature>
<feature type="turn" evidence="3">
    <location>
        <begin position="141"/>
        <end position="143"/>
    </location>
</feature>
<feature type="turn" evidence="3">
    <location>
        <begin position="145"/>
        <end position="147"/>
    </location>
</feature>
<feature type="helix" evidence="3">
    <location>
        <begin position="154"/>
        <end position="180"/>
    </location>
</feature>
<feature type="strand" evidence="3">
    <location>
        <begin position="185"/>
        <end position="187"/>
    </location>
</feature>
<feature type="strand" evidence="3">
    <location>
        <begin position="193"/>
        <end position="197"/>
    </location>
</feature>
<feature type="helix" evidence="3">
    <location>
        <begin position="206"/>
        <end position="213"/>
    </location>
</feature>
<feature type="strand" evidence="3">
    <location>
        <begin position="217"/>
        <end position="219"/>
    </location>
</feature>
<feature type="helix" evidence="3">
    <location>
        <begin position="223"/>
        <end position="226"/>
    </location>
</feature>
<feature type="helix" evidence="3">
    <location>
        <begin position="230"/>
        <end position="253"/>
    </location>
</feature>
<feature type="helix" evidence="3">
    <location>
        <begin position="258"/>
        <end position="261"/>
    </location>
</feature>
<feature type="helix" evidence="3">
    <location>
        <begin position="268"/>
        <end position="292"/>
    </location>
</feature>
<feature type="turn" evidence="3">
    <location>
        <begin position="295"/>
        <end position="301"/>
    </location>
</feature>
<feature type="helix" evidence="3">
    <location>
        <begin position="306"/>
        <end position="323"/>
    </location>
</feature>
<feature type="turn" evidence="3">
    <location>
        <begin position="328"/>
        <end position="330"/>
    </location>
</feature>
<feature type="strand" evidence="3">
    <location>
        <begin position="336"/>
        <end position="343"/>
    </location>
</feature>
<feature type="strand" evidence="4">
    <location>
        <begin position="345"/>
        <end position="347"/>
    </location>
</feature>
<feature type="strand" evidence="3">
    <location>
        <begin position="349"/>
        <end position="351"/>
    </location>
</feature>
<feature type="helix" evidence="3">
    <location>
        <begin position="354"/>
        <end position="358"/>
    </location>
</feature>
<feature type="turn" evidence="3">
    <location>
        <begin position="364"/>
        <end position="366"/>
    </location>
</feature>
<feature type="helix" evidence="3">
    <location>
        <begin position="367"/>
        <end position="369"/>
    </location>
</feature>
<feature type="helix" evidence="3">
    <location>
        <begin position="377"/>
        <end position="382"/>
    </location>
</feature>
<feature type="helix" evidence="3">
    <location>
        <begin position="386"/>
        <end position="397"/>
    </location>
</feature>
<feature type="strand" evidence="3">
    <location>
        <begin position="407"/>
        <end position="409"/>
    </location>
</feature>
<feature type="helix" evidence="3">
    <location>
        <begin position="422"/>
        <end position="453"/>
    </location>
</feature>
<feature type="strand" evidence="3">
    <location>
        <begin position="461"/>
        <end position="463"/>
    </location>
</feature>
<feature type="helix" evidence="3">
    <location>
        <begin position="466"/>
        <end position="468"/>
    </location>
</feature>
<protein>
    <recommendedName>
        <fullName evidence="1">Photosystem II CP43 reaction center protein</fullName>
    </recommendedName>
    <alternativeName>
        <fullName evidence="1">PSII 43 kDa protein</fullName>
    </alternativeName>
    <alternativeName>
        <fullName evidence="2">Photosystem II 44 kDa chlorophyll apoprotein</fullName>
    </alternativeName>
    <alternativeName>
        <fullName evidence="1">Protein CP-43</fullName>
    </alternativeName>
</protein>
<proteinExistence type="evidence at protein level"/>
<evidence type="ECO:0000255" key="1">
    <source>
        <dbReference type="HAMAP-Rule" id="MF_01496"/>
    </source>
</evidence>
<evidence type="ECO:0000303" key="2">
    <source ref="2"/>
</evidence>
<evidence type="ECO:0007829" key="3">
    <source>
        <dbReference type="PDB" id="5XNL"/>
    </source>
</evidence>
<evidence type="ECO:0007829" key="4">
    <source>
        <dbReference type="PDB" id="5XNM"/>
    </source>
</evidence>
<comment type="function">
    <text evidence="1">One of the components of the core complex of photosystem II (PSII). It binds chlorophyll and helps catalyze the primary light-induced photochemical processes of PSII. PSII is a light-driven water:plastoquinone oxidoreductase, using light energy to abstract electrons from H(2)O, generating O(2) and a proton gradient subsequently used for ATP formation.</text>
</comment>
<comment type="cofactor">
    <text evidence="1">Binds multiple chlorophylls and provides some of the ligands for the Ca-4Mn-5O cluster of the oxygen-evolving complex. It may also provide a ligand for a Cl- that is required for oxygen evolution. PSII binds additional chlorophylls, carotenoids and specific lipids.</text>
</comment>
<comment type="subunit">
    <text evidence="1">PSII is composed of 1 copy each of membrane proteins PsbA, PsbB, PsbC, PsbD, PsbE, PsbF, PsbH, PsbI, PsbJ, PsbK, PsbL, PsbM, PsbT, PsbX, PsbY, PsbZ, Psb30/Ycf12, at least 3 peripheral proteins of the oxygen-evolving complex and a large number of cofactors. It forms dimeric complexes.</text>
</comment>
<comment type="subcellular location">
    <subcellularLocation>
        <location evidence="1">Plastid</location>
        <location evidence="1">Chloroplast thylakoid membrane</location>
        <topology evidence="1">Multi-pass membrane protein</topology>
    </subcellularLocation>
</comment>
<comment type="similarity">
    <text evidence="1">Belongs to the PsbB/PsbC family. PsbC subfamily.</text>
</comment>
<organism>
    <name type="scientific">Pisum sativum</name>
    <name type="common">Garden pea</name>
    <name type="synonym">Lathyrus oleraceus</name>
    <dbReference type="NCBI Taxonomy" id="3888"/>
    <lineage>
        <taxon>Eukaryota</taxon>
        <taxon>Viridiplantae</taxon>
        <taxon>Streptophyta</taxon>
        <taxon>Embryophyta</taxon>
        <taxon>Tracheophyta</taxon>
        <taxon>Spermatophyta</taxon>
        <taxon>Magnoliopsida</taxon>
        <taxon>eudicotyledons</taxon>
        <taxon>Gunneridae</taxon>
        <taxon>Pentapetalae</taxon>
        <taxon>rosids</taxon>
        <taxon>fabids</taxon>
        <taxon>Fabales</taxon>
        <taxon>Fabaceae</taxon>
        <taxon>Papilionoideae</taxon>
        <taxon>50 kb inversion clade</taxon>
        <taxon>NPAAA clade</taxon>
        <taxon>Hologalegina</taxon>
        <taxon>IRL clade</taxon>
        <taxon>Fabeae</taxon>
        <taxon>Pisum</taxon>
    </lineage>
</organism>
<accession>P06004</accession>
<keyword id="KW-0002">3D-structure</keyword>
<keyword id="KW-0007">Acetylation</keyword>
<keyword id="KW-0148">Chlorophyll</keyword>
<keyword id="KW-0150">Chloroplast</keyword>
<keyword id="KW-0157">Chromophore</keyword>
<keyword id="KW-0464">Manganese</keyword>
<keyword id="KW-0472">Membrane</keyword>
<keyword id="KW-0479">Metal-binding</keyword>
<keyword id="KW-0597">Phosphoprotein</keyword>
<keyword id="KW-0602">Photosynthesis</keyword>
<keyword id="KW-0604">Photosystem II</keyword>
<keyword id="KW-0934">Plastid</keyword>
<keyword id="KW-0793">Thylakoid</keyword>
<keyword id="KW-0812">Transmembrane</keyword>
<keyword id="KW-1133">Transmembrane helix</keyword>
<gene>
    <name evidence="1" type="primary">psbC</name>
</gene>